<sequence>MANHPLTLEKDGFIVTTLDAAMAAAQKNSLWYMTFGLACCAVEMMHAAGARYDMDRFGMIPRASPRQCDLMIVAGTLTNKMAPAMRRVYDQMAEPRYVVSMGSCANGGGYYHYSYSVVRGCDRIVPVDVYVPGCPPTAEALVYGLMQLQRKVAERSTHSRPKLFARP</sequence>
<organism>
    <name type="scientific">Burkholderia pseudomallei (strain K96243)</name>
    <dbReference type="NCBI Taxonomy" id="272560"/>
    <lineage>
        <taxon>Bacteria</taxon>
        <taxon>Pseudomonadati</taxon>
        <taxon>Pseudomonadota</taxon>
        <taxon>Betaproteobacteria</taxon>
        <taxon>Burkholderiales</taxon>
        <taxon>Burkholderiaceae</taxon>
        <taxon>Burkholderia</taxon>
        <taxon>pseudomallei group</taxon>
    </lineage>
</organism>
<proteinExistence type="inferred from homology"/>
<evidence type="ECO:0000250" key="1"/>
<evidence type="ECO:0000255" key="2">
    <source>
        <dbReference type="HAMAP-Rule" id="MF_01356"/>
    </source>
</evidence>
<name>NUOB2_BURPS</name>
<protein>
    <recommendedName>
        <fullName evidence="2">NADH-quinone oxidoreductase subunit B 2</fullName>
        <ecNumber evidence="2">7.1.1.-</ecNumber>
    </recommendedName>
    <alternativeName>
        <fullName evidence="2">NADH dehydrogenase I subunit B 2</fullName>
    </alternativeName>
    <alternativeName>
        <fullName evidence="2">NDH-1 subunit B 2</fullName>
    </alternativeName>
</protein>
<dbReference type="EC" id="7.1.1.-" evidence="2"/>
<dbReference type="EMBL" id="BX571965">
    <property type="protein sequence ID" value="CAH37074.1"/>
    <property type="molecule type" value="Genomic_DNA"/>
</dbReference>
<dbReference type="RefSeq" id="WP_004186860.1">
    <property type="nucleotide sequence ID" value="NZ_CP009538.1"/>
</dbReference>
<dbReference type="RefSeq" id="YP_109658.1">
    <property type="nucleotide sequence ID" value="NC_006350.1"/>
</dbReference>
<dbReference type="SMR" id="Q63QG0"/>
<dbReference type="STRING" id="272560.BPSL3063"/>
<dbReference type="KEGG" id="bps:BPSL3063"/>
<dbReference type="PATRIC" id="fig|272560.51.peg.2199"/>
<dbReference type="eggNOG" id="COG0377">
    <property type="taxonomic scope" value="Bacteria"/>
</dbReference>
<dbReference type="Proteomes" id="UP000000605">
    <property type="component" value="Chromosome 1"/>
</dbReference>
<dbReference type="GO" id="GO:0005886">
    <property type="term" value="C:plasma membrane"/>
    <property type="evidence" value="ECO:0007669"/>
    <property type="project" value="UniProtKB-SubCell"/>
</dbReference>
<dbReference type="GO" id="GO:0045271">
    <property type="term" value="C:respiratory chain complex I"/>
    <property type="evidence" value="ECO:0007669"/>
    <property type="project" value="TreeGrafter"/>
</dbReference>
<dbReference type="GO" id="GO:0051539">
    <property type="term" value="F:4 iron, 4 sulfur cluster binding"/>
    <property type="evidence" value="ECO:0007669"/>
    <property type="project" value="UniProtKB-KW"/>
</dbReference>
<dbReference type="GO" id="GO:0005506">
    <property type="term" value="F:iron ion binding"/>
    <property type="evidence" value="ECO:0007669"/>
    <property type="project" value="UniProtKB-UniRule"/>
</dbReference>
<dbReference type="GO" id="GO:0008137">
    <property type="term" value="F:NADH dehydrogenase (ubiquinone) activity"/>
    <property type="evidence" value="ECO:0007669"/>
    <property type="project" value="InterPro"/>
</dbReference>
<dbReference type="GO" id="GO:0050136">
    <property type="term" value="F:NADH:ubiquinone reductase (non-electrogenic) activity"/>
    <property type="evidence" value="ECO:0007669"/>
    <property type="project" value="UniProtKB-UniRule"/>
</dbReference>
<dbReference type="GO" id="GO:0048038">
    <property type="term" value="F:quinone binding"/>
    <property type="evidence" value="ECO:0007669"/>
    <property type="project" value="UniProtKB-KW"/>
</dbReference>
<dbReference type="GO" id="GO:0009060">
    <property type="term" value="P:aerobic respiration"/>
    <property type="evidence" value="ECO:0007669"/>
    <property type="project" value="TreeGrafter"/>
</dbReference>
<dbReference type="GO" id="GO:0015990">
    <property type="term" value="P:electron transport coupled proton transport"/>
    <property type="evidence" value="ECO:0007669"/>
    <property type="project" value="TreeGrafter"/>
</dbReference>
<dbReference type="FunFam" id="3.40.50.12280:FF:000001">
    <property type="entry name" value="NADH-quinone oxidoreductase subunit B 2"/>
    <property type="match status" value="1"/>
</dbReference>
<dbReference type="Gene3D" id="3.40.50.12280">
    <property type="match status" value="1"/>
</dbReference>
<dbReference type="HAMAP" id="MF_01356">
    <property type="entry name" value="NDH1_NuoB"/>
    <property type="match status" value="1"/>
</dbReference>
<dbReference type="InterPro" id="IPR006137">
    <property type="entry name" value="NADH_UbQ_OxRdtase-like_20kDa"/>
</dbReference>
<dbReference type="InterPro" id="IPR006138">
    <property type="entry name" value="NADH_UQ_OxRdtase_20Kd_su"/>
</dbReference>
<dbReference type="NCBIfam" id="TIGR01957">
    <property type="entry name" value="nuoB_fam"/>
    <property type="match status" value="1"/>
</dbReference>
<dbReference type="NCBIfam" id="NF005012">
    <property type="entry name" value="PRK06411.1"/>
    <property type="match status" value="1"/>
</dbReference>
<dbReference type="PANTHER" id="PTHR11995">
    <property type="entry name" value="NADH DEHYDROGENASE"/>
    <property type="match status" value="1"/>
</dbReference>
<dbReference type="PANTHER" id="PTHR11995:SF14">
    <property type="entry name" value="NADH DEHYDROGENASE [UBIQUINONE] IRON-SULFUR PROTEIN 7, MITOCHONDRIAL"/>
    <property type="match status" value="1"/>
</dbReference>
<dbReference type="Pfam" id="PF01058">
    <property type="entry name" value="Oxidored_q6"/>
    <property type="match status" value="1"/>
</dbReference>
<dbReference type="SUPFAM" id="SSF56770">
    <property type="entry name" value="HydA/Nqo6-like"/>
    <property type="match status" value="1"/>
</dbReference>
<dbReference type="PROSITE" id="PS01150">
    <property type="entry name" value="COMPLEX1_20K"/>
    <property type="match status" value="1"/>
</dbReference>
<accession>Q63QG0</accession>
<keyword id="KW-0004">4Fe-4S</keyword>
<keyword id="KW-0997">Cell inner membrane</keyword>
<keyword id="KW-1003">Cell membrane</keyword>
<keyword id="KW-0408">Iron</keyword>
<keyword id="KW-0411">Iron-sulfur</keyword>
<keyword id="KW-0472">Membrane</keyword>
<keyword id="KW-0479">Metal-binding</keyword>
<keyword id="KW-0520">NAD</keyword>
<keyword id="KW-0874">Quinone</keyword>
<keyword id="KW-1185">Reference proteome</keyword>
<keyword id="KW-1278">Translocase</keyword>
<keyword id="KW-0813">Transport</keyword>
<keyword id="KW-0830">Ubiquinone</keyword>
<comment type="function">
    <text evidence="1">NDH-1 shuttles electrons from NADH, via FMN and iron-sulfur (Fe-S) centers, to quinones in the respiratory chain. Couples the redox reaction to proton translocation (for every two electrons transferred, four hydrogen ions are translocated across the cytoplasmic membrane), and thus conserves the redox energy in a proton gradient (By similarity).</text>
</comment>
<comment type="catalytic activity">
    <reaction evidence="2">
        <text>a quinone + NADH + 5 H(+)(in) = a quinol + NAD(+) + 4 H(+)(out)</text>
        <dbReference type="Rhea" id="RHEA:57888"/>
        <dbReference type="ChEBI" id="CHEBI:15378"/>
        <dbReference type="ChEBI" id="CHEBI:24646"/>
        <dbReference type="ChEBI" id="CHEBI:57540"/>
        <dbReference type="ChEBI" id="CHEBI:57945"/>
        <dbReference type="ChEBI" id="CHEBI:132124"/>
    </reaction>
</comment>
<comment type="cofactor">
    <cofactor evidence="2">
        <name>[4Fe-4S] cluster</name>
        <dbReference type="ChEBI" id="CHEBI:49883"/>
    </cofactor>
    <text evidence="2">Binds 1 [4Fe-4S] cluster.</text>
</comment>
<comment type="subunit">
    <text evidence="2">NDH-1 is composed of 14 different subunits. Subunits NuoB, C, D, E, F, and G constitute the peripheral sector of the complex.</text>
</comment>
<comment type="subcellular location">
    <subcellularLocation>
        <location evidence="2">Cell inner membrane</location>
        <topology evidence="2">Peripheral membrane protein</topology>
        <orientation evidence="2">Cytoplasmic side</orientation>
    </subcellularLocation>
</comment>
<comment type="similarity">
    <text evidence="2">Belongs to the complex I 20 kDa subunit family.</text>
</comment>
<gene>
    <name evidence="2" type="primary">nuoB2</name>
    <name type="ordered locus">BPSL3063</name>
</gene>
<feature type="chain" id="PRO_0000358381" description="NADH-quinone oxidoreductase subunit B 2">
    <location>
        <begin position="1"/>
        <end position="167"/>
    </location>
</feature>
<feature type="binding site" evidence="2">
    <location>
        <position position="39"/>
    </location>
    <ligand>
        <name>[4Fe-4S] cluster</name>
        <dbReference type="ChEBI" id="CHEBI:49883"/>
    </ligand>
</feature>
<feature type="binding site" evidence="2">
    <location>
        <position position="40"/>
    </location>
    <ligand>
        <name>[4Fe-4S] cluster</name>
        <dbReference type="ChEBI" id="CHEBI:49883"/>
    </ligand>
</feature>
<feature type="binding site" evidence="2">
    <location>
        <position position="104"/>
    </location>
    <ligand>
        <name>[4Fe-4S] cluster</name>
        <dbReference type="ChEBI" id="CHEBI:49883"/>
    </ligand>
</feature>
<feature type="binding site" evidence="2">
    <location>
        <position position="134"/>
    </location>
    <ligand>
        <name>[4Fe-4S] cluster</name>
        <dbReference type="ChEBI" id="CHEBI:49883"/>
    </ligand>
</feature>
<reference key="1">
    <citation type="journal article" date="2004" name="Proc. Natl. Acad. Sci. U.S.A.">
        <title>Genomic plasticity of the causative agent of melioidosis, Burkholderia pseudomallei.</title>
        <authorList>
            <person name="Holden M.T.G."/>
            <person name="Titball R.W."/>
            <person name="Peacock S.J."/>
            <person name="Cerdeno-Tarraga A.-M."/>
            <person name="Atkins T."/>
            <person name="Crossman L.C."/>
            <person name="Pitt T."/>
            <person name="Churcher C."/>
            <person name="Mungall K.L."/>
            <person name="Bentley S.D."/>
            <person name="Sebaihia M."/>
            <person name="Thomson N.R."/>
            <person name="Bason N."/>
            <person name="Beacham I.R."/>
            <person name="Brooks K."/>
            <person name="Brown K.A."/>
            <person name="Brown N.F."/>
            <person name="Challis G.L."/>
            <person name="Cherevach I."/>
            <person name="Chillingworth T."/>
            <person name="Cronin A."/>
            <person name="Crossett B."/>
            <person name="Davis P."/>
            <person name="DeShazer D."/>
            <person name="Feltwell T."/>
            <person name="Fraser A."/>
            <person name="Hance Z."/>
            <person name="Hauser H."/>
            <person name="Holroyd S."/>
            <person name="Jagels K."/>
            <person name="Keith K.E."/>
            <person name="Maddison M."/>
            <person name="Moule S."/>
            <person name="Price C."/>
            <person name="Quail M.A."/>
            <person name="Rabbinowitsch E."/>
            <person name="Rutherford K."/>
            <person name="Sanders M."/>
            <person name="Simmonds M."/>
            <person name="Songsivilai S."/>
            <person name="Stevens K."/>
            <person name="Tumapa S."/>
            <person name="Vesaratchavest M."/>
            <person name="Whitehead S."/>
            <person name="Yeats C."/>
            <person name="Barrell B.G."/>
            <person name="Oyston P.C.F."/>
            <person name="Parkhill J."/>
        </authorList>
    </citation>
    <scope>NUCLEOTIDE SEQUENCE [LARGE SCALE GENOMIC DNA]</scope>
    <source>
        <strain>K96243</strain>
    </source>
</reference>